<organism>
    <name type="scientific">Frankia casuarinae (strain DSM 45818 / CECT 9043 / HFP020203 / CcI3)</name>
    <dbReference type="NCBI Taxonomy" id="106370"/>
    <lineage>
        <taxon>Bacteria</taxon>
        <taxon>Bacillati</taxon>
        <taxon>Actinomycetota</taxon>
        <taxon>Actinomycetes</taxon>
        <taxon>Frankiales</taxon>
        <taxon>Frankiaceae</taxon>
        <taxon>Frankia</taxon>
    </lineage>
</organism>
<name>PANB_FRACC</name>
<dbReference type="EC" id="2.1.2.11" evidence="1"/>
<dbReference type="EMBL" id="CP000249">
    <property type="protein sequence ID" value="ABD12506.1"/>
    <property type="molecule type" value="Genomic_DNA"/>
</dbReference>
<dbReference type="RefSeq" id="WP_011437534.1">
    <property type="nucleotide sequence ID" value="NZ_LRTJ01000072.1"/>
</dbReference>
<dbReference type="SMR" id="Q2J886"/>
<dbReference type="STRING" id="106370.Francci3_3149"/>
<dbReference type="KEGG" id="fra:Francci3_3149"/>
<dbReference type="eggNOG" id="COG0413">
    <property type="taxonomic scope" value="Bacteria"/>
</dbReference>
<dbReference type="HOGENOM" id="CLU_036645_1_0_11"/>
<dbReference type="OrthoDB" id="9781789at2"/>
<dbReference type="PhylomeDB" id="Q2J886"/>
<dbReference type="UniPathway" id="UPA00028">
    <property type="reaction ID" value="UER00003"/>
</dbReference>
<dbReference type="Proteomes" id="UP000001937">
    <property type="component" value="Chromosome"/>
</dbReference>
<dbReference type="GO" id="GO:0005737">
    <property type="term" value="C:cytoplasm"/>
    <property type="evidence" value="ECO:0007669"/>
    <property type="project" value="UniProtKB-SubCell"/>
</dbReference>
<dbReference type="GO" id="GO:0003864">
    <property type="term" value="F:3-methyl-2-oxobutanoate hydroxymethyltransferase activity"/>
    <property type="evidence" value="ECO:0007669"/>
    <property type="project" value="UniProtKB-UniRule"/>
</dbReference>
<dbReference type="GO" id="GO:0000287">
    <property type="term" value="F:magnesium ion binding"/>
    <property type="evidence" value="ECO:0007669"/>
    <property type="project" value="TreeGrafter"/>
</dbReference>
<dbReference type="GO" id="GO:0015940">
    <property type="term" value="P:pantothenate biosynthetic process"/>
    <property type="evidence" value="ECO:0007669"/>
    <property type="project" value="UniProtKB-UniRule"/>
</dbReference>
<dbReference type="CDD" id="cd06557">
    <property type="entry name" value="KPHMT-like"/>
    <property type="match status" value="1"/>
</dbReference>
<dbReference type="FunFam" id="3.20.20.60:FF:000003">
    <property type="entry name" value="3-methyl-2-oxobutanoate hydroxymethyltransferase"/>
    <property type="match status" value="1"/>
</dbReference>
<dbReference type="Gene3D" id="3.20.20.60">
    <property type="entry name" value="Phosphoenolpyruvate-binding domains"/>
    <property type="match status" value="1"/>
</dbReference>
<dbReference type="HAMAP" id="MF_00156">
    <property type="entry name" value="PanB"/>
    <property type="match status" value="1"/>
</dbReference>
<dbReference type="InterPro" id="IPR003700">
    <property type="entry name" value="Pantoate_hydroxy_MeTrfase"/>
</dbReference>
<dbReference type="InterPro" id="IPR015813">
    <property type="entry name" value="Pyrv/PenolPyrv_kinase-like_dom"/>
</dbReference>
<dbReference type="InterPro" id="IPR040442">
    <property type="entry name" value="Pyrv_kinase-like_dom_sf"/>
</dbReference>
<dbReference type="NCBIfam" id="TIGR00222">
    <property type="entry name" value="panB"/>
    <property type="match status" value="1"/>
</dbReference>
<dbReference type="NCBIfam" id="NF001452">
    <property type="entry name" value="PRK00311.1"/>
    <property type="match status" value="1"/>
</dbReference>
<dbReference type="PANTHER" id="PTHR20881">
    <property type="entry name" value="3-METHYL-2-OXOBUTANOATE HYDROXYMETHYLTRANSFERASE"/>
    <property type="match status" value="1"/>
</dbReference>
<dbReference type="PANTHER" id="PTHR20881:SF0">
    <property type="entry name" value="3-METHYL-2-OXOBUTANOATE HYDROXYMETHYLTRANSFERASE"/>
    <property type="match status" value="1"/>
</dbReference>
<dbReference type="Pfam" id="PF02548">
    <property type="entry name" value="Pantoate_transf"/>
    <property type="match status" value="1"/>
</dbReference>
<dbReference type="PIRSF" id="PIRSF000388">
    <property type="entry name" value="Pantoate_hydroxy_MeTrfase"/>
    <property type="match status" value="1"/>
</dbReference>
<dbReference type="SUPFAM" id="SSF51621">
    <property type="entry name" value="Phosphoenolpyruvate/pyruvate domain"/>
    <property type="match status" value="1"/>
</dbReference>
<gene>
    <name evidence="1" type="primary">panB</name>
    <name type="ordered locus">Francci3_3149</name>
</gene>
<protein>
    <recommendedName>
        <fullName evidence="1">3-methyl-2-oxobutanoate hydroxymethyltransferase</fullName>
        <ecNumber evidence="1">2.1.2.11</ecNumber>
    </recommendedName>
    <alternativeName>
        <fullName evidence="1">Ketopantoate hydroxymethyltransferase</fullName>
        <shortName evidence="1">KPHMT</shortName>
    </alternativeName>
</protein>
<sequence>MDASDTPTHPAPHPADPAATPYGAPTTPPRPLRSRFTVRDVAAAKNRGEKWSMLTAYDATTAAVFDEAEIPVLLVGDSAANVVYGYDTTVPITVDELLPLVRAVVRGAPHAMVVADLPFGSYQGGPAEALASATRFLKEGGAHAVKLEGGSRVVRAVDALVGAGIPVIGHLGLTPQSIHTIGGYRVQGRDEAGEILLADALALEAAGAFAVVLEVVPADLATRVTKELRIATVGIGAGSGCDAQVLVWQDMAGLSGGRTPRFVKRYADLRTILADAARAYRADVRDGRYPTIEHSY</sequence>
<accession>Q2J886</accession>
<evidence type="ECO:0000255" key="1">
    <source>
        <dbReference type="HAMAP-Rule" id="MF_00156"/>
    </source>
</evidence>
<evidence type="ECO:0000256" key="2">
    <source>
        <dbReference type="SAM" id="MobiDB-lite"/>
    </source>
</evidence>
<proteinExistence type="inferred from homology"/>
<reference key="1">
    <citation type="journal article" date="2007" name="Genome Res.">
        <title>Genome characteristics of facultatively symbiotic Frankia sp. strains reflect host range and host plant biogeography.</title>
        <authorList>
            <person name="Normand P."/>
            <person name="Lapierre P."/>
            <person name="Tisa L.S."/>
            <person name="Gogarten J.P."/>
            <person name="Alloisio N."/>
            <person name="Bagnarol E."/>
            <person name="Bassi C.A."/>
            <person name="Berry A.M."/>
            <person name="Bickhart D.M."/>
            <person name="Choisne N."/>
            <person name="Couloux A."/>
            <person name="Cournoyer B."/>
            <person name="Cruveiller S."/>
            <person name="Daubin V."/>
            <person name="Demange N."/>
            <person name="Francino M.P."/>
            <person name="Goltsman E."/>
            <person name="Huang Y."/>
            <person name="Kopp O.R."/>
            <person name="Labarre L."/>
            <person name="Lapidus A."/>
            <person name="Lavire C."/>
            <person name="Marechal J."/>
            <person name="Martinez M."/>
            <person name="Mastronunzio J.E."/>
            <person name="Mullin B.C."/>
            <person name="Niemann J."/>
            <person name="Pujic P."/>
            <person name="Rawnsley T."/>
            <person name="Rouy Z."/>
            <person name="Schenowitz C."/>
            <person name="Sellstedt A."/>
            <person name="Tavares F."/>
            <person name="Tomkins J.P."/>
            <person name="Vallenet D."/>
            <person name="Valverde C."/>
            <person name="Wall L.G."/>
            <person name="Wang Y."/>
            <person name="Medigue C."/>
            <person name="Benson D.R."/>
        </authorList>
    </citation>
    <scope>NUCLEOTIDE SEQUENCE [LARGE SCALE GENOMIC DNA]</scope>
    <source>
        <strain>DSM 45818 / CECT 9043 / HFP020203 / CcI3</strain>
    </source>
</reference>
<keyword id="KW-0963">Cytoplasm</keyword>
<keyword id="KW-0460">Magnesium</keyword>
<keyword id="KW-0479">Metal-binding</keyword>
<keyword id="KW-0566">Pantothenate biosynthesis</keyword>
<keyword id="KW-1185">Reference proteome</keyword>
<keyword id="KW-0808">Transferase</keyword>
<feature type="chain" id="PRO_0000297273" description="3-methyl-2-oxobutanoate hydroxymethyltransferase">
    <location>
        <begin position="1"/>
        <end position="296"/>
    </location>
</feature>
<feature type="region of interest" description="Disordered" evidence="2">
    <location>
        <begin position="1"/>
        <end position="33"/>
    </location>
</feature>
<feature type="compositionally biased region" description="Low complexity" evidence="2">
    <location>
        <begin position="16"/>
        <end position="25"/>
    </location>
</feature>
<feature type="active site" description="Proton acceptor" evidence="1">
    <location>
        <position position="214"/>
    </location>
</feature>
<feature type="binding site" evidence="1">
    <location>
        <begin position="77"/>
        <end position="78"/>
    </location>
    <ligand>
        <name>3-methyl-2-oxobutanoate</name>
        <dbReference type="ChEBI" id="CHEBI:11851"/>
    </ligand>
</feature>
<feature type="binding site" evidence="1">
    <location>
        <position position="77"/>
    </location>
    <ligand>
        <name>Mg(2+)</name>
        <dbReference type="ChEBI" id="CHEBI:18420"/>
    </ligand>
</feature>
<feature type="binding site" evidence="1">
    <location>
        <position position="116"/>
    </location>
    <ligand>
        <name>3-methyl-2-oxobutanoate</name>
        <dbReference type="ChEBI" id="CHEBI:11851"/>
    </ligand>
</feature>
<feature type="binding site" evidence="1">
    <location>
        <position position="116"/>
    </location>
    <ligand>
        <name>Mg(2+)</name>
        <dbReference type="ChEBI" id="CHEBI:18420"/>
    </ligand>
</feature>
<feature type="binding site" evidence="1">
    <location>
        <position position="146"/>
    </location>
    <ligand>
        <name>3-methyl-2-oxobutanoate</name>
        <dbReference type="ChEBI" id="CHEBI:11851"/>
    </ligand>
</feature>
<feature type="binding site" evidence="1">
    <location>
        <position position="148"/>
    </location>
    <ligand>
        <name>Mg(2+)</name>
        <dbReference type="ChEBI" id="CHEBI:18420"/>
    </ligand>
</feature>
<comment type="function">
    <text evidence="1">Catalyzes the reversible reaction in which hydroxymethyl group from 5,10-methylenetetrahydrofolate is transferred onto alpha-ketoisovalerate to form ketopantoate.</text>
</comment>
<comment type="catalytic activity">
    <reaction evidence="1">
        <text>3-methyl-2-oxobutanoate + (6R)-5,10-methylene-5,6,7,8-tetrahydrofolate + H2O = 2-dehydropantoate + (6S)-5,6,7,8-tetrahydrofolate</text>
        <dbReference type="Rhea" id="RHEA:11824"/>
        <dbReference type="ChEBI" id="CHEBI:11561"/>
        <dbReference type="ChEBI" id="CHEBI:11851"/>
        <dbReference type="ChEBI" id="CHEBI:15377"/>
        <dbReference type="ChEBI" id="CHEBI:15636"/>
        <dbReference type="ChEBI" id="CHEBI:57453"/>
        <dbReference type="EC" id="2.1.2.11"/>
    </reaction>
</comment>
<comment type="cofactor">
    <cofactor evidence="1">
        <name>Mg(2+)</name>
        <dbReference type="ChEBI" id="CHEBI:18420"/>
    </cofactor>
    <text evidence="1">Binds 1 Mg(2+) ion per subunit.</text>
</comment>
<comment type="pathway">
    <text evidence="1">Cofactor biosynthesis; (R)-pantothenate biosynthesis; (R)-pantoate from 3-methyl-2-oxobutanoate: step 1/2.</text>
</comment>
<comment type="subunit">
    <text evidence="1">Homodecamer; pentamer of dimers.</text>
</comment>
<comment type="subcellular location">
    <subcellularLocation>
        <location evidence="1">Cytoplasm</location>
    </subcellularLocation>
</comment>
<comment type="similarity">
    <text evidence="1">Belongs to the PanB family.</text>
</comment>